<reference key="1">
    <citation type="journal article" date="2005" name="BMC Genomics">
        <title>Characterization of 954 bovine full-CDS cDNA sequences.</title>
        <authorList>
            <person name="Harhay G.P."/>
            <person name="Sonstegard T.S."/>
            <person name="Keele J.W."/>
            <person name="Heaton M.P."/>
            <person name="Clawson M.L."/>
            <person name="Snelling W.M."/>
            <person name="Wiedmann R.T."/>
            <person name="Van Tassell C.P."/>
            <person name="Smith T.P.L."/>
        </authorList>
    </citation>
    <scope>NUCLEOTIDE SEQUENCE [LARGE SCALE MRNA]</scope>
</reference>
<organism>
    <name type="scientific">Bos taurus</name>
    <name type="common">Bovine</name>
    <dbReference type="NCBI Taxonomy" id="9913"/>
    <lineage>
        <taxon>Eukaryota</taxon>
        <taxon>Metazoa</taxon>
        <taxon>Chordata</taxon>
        <taxon>Craniata</taxon>
        <taxon>Vertebrata</taxon>
        <taxon>Euteleostomi</taxon>
        <taxon>Mammalia</taxon>
        <taxon>Eutheria</taxon>
        <taxon>Laurasiatheria</taxon>
        <taxon>Artiodactyla</taxon>
        <taxon>Ruminantia</taxon>
        <taxon>Pecora</taxon>
        <taxon>Bovidae</taxon>
        <taxon>Bovinae</taxon>
        <taxon>Bos</taxon>
    </lineage>
</organism>
<sequence>MAVSASVAAGDEDWVLPSEVEVLESIYLDELQVVKGNGRSSPWEIYITLHPATAEDQDSQYVCFTLVLQVPTQYPHEVPQISIRNPRGLSDEQIHKISQALSHVAEAGLGTAMLYELIEKGKEILTDNNIPHGQCVICLYGFQEKEAFTKTPCYHYFRCHCLARYIQHMEHELQAQGREREQERQHAAPEQAVGVQCPVCREPLVYDLASLKAAPEPQQPMELYQPDAESLRQQEERKRLYQRQQERGGIIDLEAERNRYFISLQQPPAPLEPESAIDVSRGSHQPSTLATKPSTTSATHTALSVSLPLASQYTCEKTPGAGPHLPKLGETQKAVLDPRRASRGPWRQPERRHLKGGECNTLKGTSDTQKLQSPEGPLKESMDLKPESHNQGGKGPPQDKGPGEWQGPPPRRTRDCAHWERAKNRTPASSYPRLPRGRGAYRPGPRREPVSLESEDGS</sequence>
<proteinExistence type="evidence at transcript level"/>
<protein>
    <recommendedName>
        <fullName evidence="7">E3 ubiquitin-protein ligase RNF25</fullName>
        <ecNumber evidence="2">2.3.2.27</ecNumber>
    </recommendedName>
    <alternativeName>
        <fullName evidence="7">RING finger protein 25</fullName>
    </alternativeName>
</protein>
<accession>Q5E9N3</accession>
<feature type="chain" id="PRO_0000056065" description="E3 ubiquitin-protein ligase RNF25">
    <location>
        <begin position="1"/>
        <end position="458"/>
    </location>
</feature>
<feature type="domain" description="RWD" evidence="5">
    <location>
        <begin position="18"/>
        <end position="128"/>
    </location>
</feature>
<feature type="zinc finger region" description="RING-type" evidence="4">
    <location>
        <begin position="135"/>
        <end position="201"/>
    </location>
</feature>
<feature type="region of interest" description="Disordered" evidence="6">
    <location>
        <begin position="267"/>
        <end position="299"/>
    </location>
</feature>
<feature type="region of interest" description="Disordered" evidence="6">
    <location>
        <begin position="317"/>
        <end position="458"/>
    </location>
</feature>
<feature type="compositionally biased region" description="Polar residues" evidence="6">
    <location>
        <begin position="282"/>
        <end position="299"/>
    </location>
</feature>
<feature type="compositionally biased region" description="Polar residues" evidence="6">
    <location>
        <begin position="362"/>
        <end position="372"/>
    </location>
</feature>
<feature type="compositionally biased region" description="Basic and acidic residues" evidence="6">
    <location>
        <begin position="377"/>
        <end position="388"/>
    </location>
</feature>
<feature type="compositionally biased region" description="Basic and acidic residues" evidence="6">
    <location>
        <begin position="412"/>
        <end position="423"/>
    </location>
</feature>
<feature type="compositionally biased region" description="Low complexity" evidence="6">
    <location>
        <begin position="432"/>
        <end position="443"/>
    </location>
</feature>
<feature type="binding site" evidence="2">
    <location>
        <position position="135"/>
    </location>
    <ligand>
        <name>Zn(2+)</name>
        <dbReference type="ChEBI" id="CHEBI:29105"/>
        <label>1</label>
    </ligand>
</feature>
<feature type="binding site" evidence="2">
    <location>
        <position position="138"/>
    </location>
    <ligand>
        <name>Zn(2+)</name>
        <dbReference type="ChEBI" id="CHEBI:29105"/>
        <label>1</label>
    </ligand>
</feature>
<feature type="binding site" evidence="2">
    <location>
        <position position="153"/>
    </location>
    <ligand>
        <name>Zn(2+)</name>
        <dbReference type="ChEBI" id="CHEBI:29105"/>
        <label>2</label>
    </ligand>
</feature>
<feature type="binding site" evidence="2">
    <location>
        <position position="155"/>
    </location>
    <ligand>
        <name>Zn(2+)</name>
        <dbReference type="ChEBI" id="CHEBI:29105"/>
        <label>2</label>
    </ligand>
</feature>
<feature type="binding site" evidence="2">
    <location>
        <position position="161"/>
    </location>
    <ligand>
        <name>Zn(2+)</name>
        <dbReference type="ChEBI" id="CHEBI:29105"/>
        <label>1</label>
    </ligand>
</feature>
<feature type="binding site" evidence="2">
    <location>
        <position position="197"/>
    </location>
    <ligand>
        <name>Zn(2+)</name>
        <dbReference type="ChEBI" id="CHEBI:29105"/>
        <label>2</label>
    </ligand>
</feature>
<feature type="binding site" evidence="2">
    <location>
        <position position="200"/>
    </location>
    <ligand>
        <name>Zn(2+)</name>
        <dbReference type="ChEBI" id="CHEBI:29105"/>
        <label>2</label>
    </ligand>
</feature>
<dbReference type="EC" id="2.3.2.27" evidence="2"/>
<dbReference type="EMBL" id="BT020887">
    <property type="protein sequence ID" value="AAX08904.1"/>
    <property type="molecule type" value="mRNA"/>
</dbReference>
<dbReference type="RefSeq" id="NP_001015575.1">
    <property type="nucleotide sequence ID" value="NM_001015575.1"/>
</dbReference>
<dbReference type="SMR" id="Q5E9N3"/>
<dbReference type="FunCoup" id="Q5E9N3">
    <property type="interactions" value="4349"/>
</dbReference>
<dbReference type="STRING" id="9913.ENSBTAP00000004972"/>
<dbReference type="PaxDb" id="9913-ENSBTAP00000004972"/>
<dbReference type="GeneID" id="511571"/>
<dbReference type="KEGG" id="bta:511571"/>
<dbReference type="CTD" id="64320"/>
<dbReference type="eggNOG" id="KOG4445">
    <property type="taxonomic scope" value="Eukaryota"/>
</dbReference>
<dbReference type="InParanoid" id="Q5E9N3"/>
<dbReference type="OrthoDB" id="432311at2759"/>
<dbReference type="UniPathway" id="UPA00143"/>
<dbReference type="Proteomes" id="UP000009136">
    <property type="component" value="Unplaced"/>
</dbReference>
<dbReference type="GO" id="GO:0005829">
    <property type="term" value="C:cytosol"/>
    <property type="evidence" value="ECO:0000250"/>
    <property type="project" value="UniProtKB"/>
</dbReference>
<dbReference type="GO" id="GO:0005634">
    <property type="term" value="C:nucleus"/>
    <property type="evidence" value="ECO:0000250"/>
    <property type="project" value="UniProtKB"/>
</dbReference>
<dbReference type="GO" id="GO:0051059">
    <property type="term" value="F:NF-kappaB binding"/>
    <property type="evidence" value="ECO:0000250"/>
    <property type="project" value="UniProtKB"/>
</dbReference>
<dbReference type="GO" id="GO:0061630">
    <property type="term" value="F:ubiquitin protein ligase activity"/>
    <property type="evidence" value="ECO:0000250"/>
    <property type="project" value="UniProtKB"/>
</dbReference>
<dbReference type="GO" id="GO:0004842">
    <property type="term" value="F:ubiquitin-protein transferase activity"/>
    <property type="evidence" value="ECO:0000250"/>
    <property type="project" value="UniProtKB"/>
</dbReference>
<dbReference type="GO" id="GO:0008270">
    <property type="term" value="F:zinc ion binding"/>
    <property type="evidence" value="ECO:0007669"/>
    <property type="project" value="UniProtKB-KW"/>
</dbReference>
<dbReference type="GO" id="GO:0051092">
    <property type="term" value="P:positive regulation of NF-kappaB transcription factor activity"/>
    <property type="evidence" value="ECO:0000250"/>
    <property type="project" value="UniProtKB"/>
</dbReference>
<dbReference type="GO" id="GO:0016567">
    <property type="term" value="P:protein ubiquitination"/>
    <property type="evidence" value="ECO:0000250"/>
    <property type="project" value="UniProtKB"/>
</dbReference>
<dbReference type="GO" id="GO:0072344">
    <property type="term" value="P:rescue of stalled ribosome"/>
    <property type="evidence" value="ECO:0000250"/>
    <property type="project" value="UniProtKB"/>
</dbReference>
<dbReference type="GO" id="GO:0006511">
    <property type="term" value="P:ubiquitin-dependent protein catabolic process"/>
    <property type="evidence" value="ECO:0000318"/>
    <property type="project" value="GO_Central"/>
</dbReference>
<dbReference type="CDD" id="cd16470">
    <property type="entry name" value="RING-H2_RNF25"/>
    <property type="match status" value="1"/>
</dbReference>
<dbReference type="CDD" id="cd23818">
    <property type="entry name" value="RWD_RNF25"/>
    <property type="match status" value="1"/>
</dbReference>
<dbReference type="FunFam" id="3.30.40.10:FF:000215">
    <property type="entry name" value="E3 ubiquitin-protein ligase RNF25"/>
    <property type="match status" value="1"/>
</dbReference>
<dbReference type="FunFam" id="3.10.110.10:FF:000052">
    <property type="entry name" value="Putative e3 ubiquitin-protein ligase rnf25"/>
    <property type="match status" value="1"/>
</dbReference>
<dbReference type="Gene3D" id="3.10.110.10">
    <property type="entry name" value="Ubiquitin Conjugating Enzyme"/>
    <property type="match status" value="1"/>
</dbReference>
<dbReference type="Gene3D" id="3.30.40.10">
    <property type="entry name" value="Zinc/RING finger domain, C3HC4 (zinc finger)"/>
    <property type="match status" value="1"/>
</dbReference>
<dbReference type="InterPro" id="IPR039133">
    <property type="entry name" value="RNF25"/>
</dbReference>
<dbReference type="InterPro" id="IPR006575">
    <property type="entry name" value="RWD_dom"/>
</dbReference>
<dbReference type="InterPro" id="IPR016135">
    <property type="entry name" value="UBQ-conjugating_enzyme/RWD"/>
</dbReference>
<dbReference type="InterPro" id="IPR001841">
    <property type="entry name" value="Znf_RING"/>
</dbReference>
<dbReference type="InterPro" id="IPR013083">
    <property type="entry name" value="Znf_RING/FYVE/PHD"/>
</dbReference>
<dbReference type="PANTHER" id="PTHR13198:SF4">
    <property type="entry name" value="E3 UBIQUITIN-PROTEIN LIGASE RNF25"/>
    <property type="match status" value="1"/>
</dbReference>
<dbReference type="PANTHER" id="PTHR13198">
    <property type="entry name" value="RING FINGER PROTEIN 25"/>
    <property type="match status" value="1"/>
</dbReference>
<dbReference type="Pfam" id="PF05773">
    <property type="entry name" value="RWD"/>
    <property type="match status" value="1"/>
</dbReference>
<dbReference type="SMART" id="SM00591">
    <property type="entry name" value="RWD"/>
    <property type="match status" value="1"/>
</dbReference>
<dbReference type="SUPFAM" id="SSF57850">
    <property type="entry name" value="RING/U-box"/>
    <property type="match status" value="1"/>
</dbReference>
<dbReference type="SUPFAM" id="SSF54495">
    <property type="entry name" value="UBC-like"/>
    <property type="match status" value="1"/>
</dbReference>
<dbReference type="PROSITE" id="PS50908">
    <property type="entry name" value="RWD"/>
    <property type="match status" value="1"/>
</dbReference>
<dbReference type="PROSITE" id="PS50089">
    <property type="entry name" value="ZF_RING_2"/>
    <property type="match status" value="1"/>
</dbReference>
<keyword id="KW-0963">Cytoplasm</keyword>
<keyword id="KW-0479">Metal-binding</keyword>
<keyword id="KW-1185">Reference proteome</keyword>
<keyword id="KW-0808">Transferase</keyword>
<keyword id="KW-0832">Ubl conjugation</keyword>
<keyword id="KW-0833">Ubl conjugation pathway</keyword>
<keyword id="KW-0862">Zinc</keyword>
<keyword id="KW-0863">Zinc-finger</keyword>
<comment type="function">
    <text evidence="2 3">E3 ubiquitin-protein ligase that plays a key role in the RNF14-RNF25 translation quality control pathway, a pathway that takes place when a ribosome has stalled during translation, and which promotes ubiquitination and degradation of translation factors on stalled ribosomes. Catalyzes ubiquitination of RPS27A in response to ribosome collisions, promoting activation of RNF14. RNF25 catalyzes ubiquitination of other ribosomal proteins on stalled ribosomes, such as RPL0, RPL1, RPL12, RPS13 and RPS17. Also involved in ubiquitination and degradation of stalled ETF1/eRF1 (By similarity). Independently of its function in the response to stalled ribosomes, mediates ubiquitination and subsequent proteasomal degradation of NKD2 (By similarity). May also stimulate transcription mediated by NF-kappa-B via its interaction with RELA/p65 (By similarity).</text>
</comment>
<comment type="catalytic activity">
    <reaction evidence="2">
        <text>S-ubiquitinyl-[E2 ubiquitin-conjugating enzyme]-L-cysteine + [acceptor protein]-L-lysine = [E2 ubiquitin-conjugating enzyme]-L-cysteine + N(6)-ubiquitinyl-[acceptor protein]-L-lysine.</text>
        <dbReference type="EC" id="2.3.2.27"/>
    </reaction>
</comment>
<comment type="pathway">
    <text evidence="2">Protein modification; protein ubiquitination.</text>
</comment>
<comment type="subunit">
    <text evidence="2">Interacts with UBE2D2, and may also interact with UBE2E1 and UBE2E3. Interacts with RELA/p65.</text>
</comment>
<comment type="subcellular location">
    <subcellularLocation>
        <location evidence="1">Cytoplasm</location>
    </subcellularLocation>
</comment>
<comment type="PTM">
    <text evidence="2">Ubiquitinated; autoubiquitinated.</text>
</comment>
<comment type="similarity">
    <text evidence="7">Belongs to the RNF25 family.</text>
</comment>
<name>RNF25_BOVIN</name>
<gene>
    <name type="primary">RNF25</name>
</gene>
<evidence type="ECO:0000250" key="1">
    <source>
        <dbReference type="UniProtKB" id="Q7SXJ6"/>
    </source>
</evidence>
<evidence type="ECO:0000250" key="2">
    <source>
        <dbReference type="UniProtKB" id="Q96BH1"/>
    </source>
</evidence>
<evidence type="ECO:0000250" key="3">
    <source>
        <dbReference type="UniProtKB" id="Q9QZR0"/>
    </source>
</evidence>
<evidence type="ECO:0000255" key="4">
    <source>
        <dbReference type="PROSITE-ProRule" id="PRU00175"/>
    </source>
</evidence>
<evidence type="ECO:0000255" key="5">
    <source>
        <dbReference type="PROSITE-ProRule" id="PRU00179"/>
    </source>
</evidence>
<evidence type="ECO:0000256" key="6">
    <source>
        <dbReference type="SAM" id="MobiDB-lite"/>
    </source>
</evidence>
<evidence type="ECO:0000305" key="7"/>